<feature type="chain" id="PRO_1000064116" description="2,3-bisphosphoglycerate-dependent phosphoglycerate mutase">
    <location>
        <begin position="1"/>
        <end position="250"/>
    </location>
</feature>
<feature type="active site" description="Tele-phosphohistidine intermediate" evidence="1">
    <location>
        <position position="11"/>
    </location>
</feature>
<feature type="active site" description="Proton donor/acceptor" evidence="1">
    <location>
        <position position="89"/>
    </location>
</feature>
<feature type="binding site" evidence="1">
    <location>
        <begin position="10"/>
        <end position="17"/>
    </location>
    <ligand>
        <name>substrate</name>
    </ligand>
</feature>
<feature type="binding site" evidence="1">
    <location>
        <begin position="23"/>
        <end position="24"/>
    </location>
    <ligand>
        <name>substrate</name>
    </ligand>
</feature>
<feature type="binding site" evidence="1">
    <location>
        <position position="62"/>
    </location>
    <ligand>
        <name>substrate</name>
    </ligand>
</feature>
<feature type="binding site" evidence="1">
    <location>
        <begin position="89"/>
        <end position="92"/>
    </location>
    <ligand>
        <name>substrate</name>
    </ligand>
</feature>
<feature type="binding site" evidence="1">
    <location>
        <position position="100"/>
    </location>
    <ligand>
        <name>substrate</name>
    </ligand>
</feature>
<feature type="binding site" evidence="1">
    <location>
        <begin position="116"/>
        <end position="117"/>
    </location>
    <ligand>
        <name>substrate</name>
    </ligand>
</feature>
<feature type="binding site" evidence="1">
    <location>
        <begin position="185"/>
        <end position="186"/>
    </location>
    <ligand>
        <name>substrate</name>
    </ligand>
</feature>
<feature type="site" description="Transition state stabilizer" evidence="1">
    <location>
        <position position="184"/>
    </location>
</feature>
<evidence type="ECO:0000255" key="1">
    <source>
        <dbReference type="HAMAP-Rule" id="MF_01039"/>
    </source>
</evidence>
<name>GPMA_YERPA</name>
<gene>
    <name evidence="1" type="primary">gpmA</name>
    <name type="ordered locus">YPA_1041</name>
</gene>
<dbReference type="EC" id="5.4.2.11" evidence="1"/>
<dbReference type="EMBL" id="CP000308">
    <property type="protein sequence ID" value="ABG13008.1"/>
    <property type="molecule type" value="Genomic_DNA"/>
</dbReference>
<dbReference type="RefSeq" id="WP_002210746.1">
    <property type="nucleotide sequence ID" value="NZ_CP009906.1"/>
</dbReference>
<dbReference type="SMR" id="Q1C964"/>
<dbReference type="GeneID" id="57977273"/>
<dbReference type="KEGG" id="ypa:YPA_1041"/>
<dbReference type="UniPathway" id="UPA00109">
    <property type="reaction ID" value="UER00186"/>
</dbReference>
<dbReference type="Proteomes" id="UP000001971">
    <property type="component" value="Chromosome"/>
</dbReference>
<dbReference type="GO" id="GO:0004619">
    <property type="term" value="F:phosphoglycerate mutase activity"/>
    <property type="evidence" value="ECO:0007669"/>
    <property type="project" value="UniProtKB-EC"/>
</dbReference>
<dbReference type="GO" id="GO:0006094">
    <property type="term" value="P:gluconeogenesis"/>
    <property type="evidence" value="ECO:0007669"/>
    <property type="project" value="UniProtKB-UniRule"/>
</dbReference>
<dbReference type="GO" id="GO:0006096">
    <property type="term" value="P:glycolytic process"/>
    <property type="evidence" value="ECO:0007669"/>
    <property type="project" value="UniProtKB-UniRule"/>
</dbReference>
<dbReference type="CDD" id="cd07067">
    <property type="entry name" value="HP_PGM_like"/>
    <property type="match status" value="1"/>
</dbReference>
<dbReference type="FunFam" id="3.40.50.1240:FF:000003">
    <property type="entry name" value="2,3-bisphosphoglycerate-dependent phosphoglycerate mutase"/>
    <property type="match status" value="1"/>
</dbReference>
<dbReference type="Gene3D" id="3.40.50.1240">
    <property type="entry name" value="Phosphoglycerate mutase-like"/>
    <property type="match status" value="1"/>
</dbReference>
<dbReference type="HAMAP" id="MF_01039">
    <property type="entry name" value="PGAM_GpmA"/>
    <property type="match status" value="1"/>
</dbReference>
<dbReference type="InterPro" id="IPR013078">
    <property type="entry name" value="His_Pase_superF_clade-1"/>
</dbReference>
<dbReference type="InterPro" id="IPR029033">
    <property type="entry name" value="His_PPase_superfam"/>
</dbReference>
<dbReference type="InterPro" id="IPR001345">
    <property type="entry name" value="PG/BPGM_mutase_AS"/>
</dbReference>
<dbReference type="InterPro" id="IPR005952">
    <property type="entry name" value="Phosphogly_mut1"/>
</dbReference>
<dbReference type="NCBIfam" id="TIGR01258">
    <property type="entry name" value="pgm_1"/>
    <property type="match status" value="1"/>
</dbReference>
<dbReference type="NCBIfam" id="NF010713">
    <property type="entry name" value="PRK14115.1"/>
    <property type="match status" value="1"/>
</dbReference>
<dbReference type="PANTHER" id="PTHR11931">
    <property type="entry name" value="PHOSPHOGLYCERATE MUTASE"/>
    <property type="match status" value="1"/>
</dbReference>
<dbReference type="Pfam" id="PF00300">
    <property type="entry name" value="His_Phos_1"/>
    <property type="match status" value="1"/>
</dbReference>
<dbReference type="PIRSF" id="PIRSF000709">
    <property type="entry name" value="6PFK_2-Ptase"/>
    <property type="match status" value="1"/>
</dbReference>
<dbReference type="SMART" id="SM00855">
    <property type="entry name" value="PGAM"/>
    <property type="match status" value="1"/>
</dbReference>
<dbReference type="SUPFAM" id="SSF53254">
    <property type="entry name" value="Phosphoglycerate mutase-like"/>
    <property type="match status" value="1"/>
</dbReference>
<dbReference type="PROSITE" id="PS00175">
    <property type="entry name" value="PG_MUTASE"/>
    <property type="match status" value="1"/>
</dbReference>
<reference key="1">
    <citation type="journal article" date="2006" name="J. Bacteriol.">
        <title>Complete genome sequence of Yersinia pestis strains Antiqua and Nepal516: evidence of gene reduction in an emerging pathogen.</title>
        <authorList>
            <person name="Chain P.S.G."/>
            <person name="Hu P."/>
            <person name="Malfatti S.A."/>
            <person name="Radnedge L."/>
            <person name="Larimer F."/>
            <person name="Vergez L.M."/>
            <person name="Worsham P."/>
            <person name="Chu M.C."/>
            <person name="Andersen G.L."/>
        </authorList>
    </citation>
    <scope>NUCLEOTIDE SEQUENCE [LARGE SCALE GENOMIC DNA]</scope>
    <source>
        <strain>Antiqua</strain>
    </source>
</reference>
<comment type="function">
    <text evidence="1">Catalyzes the interconversion of 2-phosphoglycerate and 3-phosphoglycerate.</text>
</comment>
<comment type="catalytic activity">
    <reaction evidence="1">
        <text>(2R)-2-phosphoglycerate = (2R)-3-phosphoglycerate</text>
        <dbReference type="Rhea" id="RHEA:15901"/>
        <dbReference type="ChEBI" id="CHEBI:58272"/>
        <dbReference type="ChEBI" id="CHEBI:58289"/>
        <dbReference type="EC" id="5.4.2.11"/>
    </reaction>
</comment>
<comment type="pathway">
    <text evidence="1">Carbohydrate degradation; glycolysis; pyruvate from D-glyceraldehyde 3-phosphate: step 3/5.</text>
</comment>
<comment type="subunit">
    <text evidence="1">Homodimer.</text>
</comment>
<comment type="similarity">
    <text evidence="1">Belongs to the phosphoglycerate mutase family. BPG-dependent PGAM subfamily.</text>
</comment>
<protein>
    <recommendedName>
        <fullName evidence="1">2,3-bisphosphoglycerate-dependent phosphoglycerate mutase</fullName>
        <shortName evidence="1">BPG-dependent PGAM</shortName>
        <shortName evidence="1">PGAM</shortName>
        <shortName evidence="1">Phosphoglyceromutase</shortName>
        <shortName evidence="1">dPGM</shortName>
        <ecNumber evidence="1">5.4.2.11</ecNumber>
    </recommendedName>
</protein>
<sequence length="250" mass="28358">MAVTKLVLVRHGESQWNNENRFTGWYDVDLSEKGRSEAKAAGKLLKDEGFTFDFAYTSVLKRAIHTLWNILDELDQAWLPTEKTWKLNERHYGALQGLNKSETAEKYGDEQVKQWRRGFAITPPALEKSDERFPGHDPRYAKLTDAELPTTESLALTIERVIPYWNDVIKPRIASGERVIIAAHGNSLRALVKYLDDLGEDEILELNIPTGVPLVYEFDENFKPIKHYYLGNADEIAAKAAAVANQGKAK</sequence>
<organism>
    <name type="scientific">Yersinia pestis bv. Antiqua (strain Antiqua)</name>
    <dbReference type="NCBI Taxonomy" id="360102"/>
    <lineage>
        <taxon>Bacteria</taxon>
        <taxon>Pseudomonadati</taxon>
        <taxon>Pseudomonadota</taxon>
        <taxon>Gammaproteobacteria</taxon>
        <taxon>Enterobacterales</taxon>
        <taxon>Yersiniaceae</taxon>
        <taxon>Yersinia</taxon>
    </lineage>
</organism>
<proteinExistence type="inferred from homology"/>
<keyword id="KW-0312">Gluconeogenesis</keyword>
<keyword id="KW-0324">Glycolysis</keyword>
<keyword id="KW-0413">Isomerase</keyword>
<accession>Q1C964</accession>